<protein>
    <recommendedName>
        <fullName>Putative arsenical pump membrane protein</fullName>
    </recommendedName>
</protein>
<reference key="1">
    <citation type="journal article" date="1997" name="Microbiology">
        <title>The Bacillus subtilis genome from gerBC (311 degrees) to licR (334 degrees).</title>
        <authorList>
            <person name="Presecan E."/>
            <person name="Moszer I."/>
            <person name="Boursier L."/>
            <person name="Cruz Ramos H."/>
            <person name="De La Fuente V."/>
            <person name="Hullo M.-F."/>
            <person name="Lelong C."/>
            <person name="Schleich S."/>
            <person name="Sekowska A."/>
            <person name="Song B.H."/>
            <person name="Villani G."/>
            <person name="Kunst F."/>
            <person name="Danchin A."/>
            <person name="Glaser P."/>
        </authorList>
    </citation>
    <scope>NUCLEOTIDE SEQUENCE [GENOMIC DNA]</scope>
    <source>
        <strain>168</strain>
    </source>
</reference>
<reference key="2">
    <citation type="journal article" date="1997" name="Nature">
        <title>The complete genome sequence of the Gram-positive bacterium Bacillus subtilis.</title>
        <authorList>
            <person name="Kunst F."/>
            <person name="Ogasawara N."/>
            <person name="Moszer I."/>
            <person name="Albertini A.M."/>
            <person name="Alloni G."/>
            <person name="Azevedo V."/>
            <person name="Bertero M.G."/>
            <person name="Bessieres P."/>
            <person name="Bolotin A."/>
            <person name="Borchert S."/>
            <person name="Borriss R."/>
            <person name="Boursier L."/>
            <person name="Brans A."/>
            <person name="Braun M."/>
            <person name="Brignell S.C."/>
            <person name="Bron S."/>
            <person name="Brouillet S."/>
            <person name="Bruschi C.V."/>
            <person name="Caldwell B."/>
            <person name="Capuano V."/>
            <person name="Carter N.M."/>
            <person name="Choi S.-K."/>
            <person name="Codani J.-J."/>
            <person name="Connerton I.F."/>
            <person name="Cummings N.J."/>
            <person name="Daniel R.A."/>
            <person name="Denizot F."/>
            <person name="Devine K.M."/>
            <person name="Duesterhoeft A."/>
            <person name="Ehrlich S.D."/>
            <person name="Emmerson P.T."/>
            <person name="Entian K.-D."/>
            <person name="Errington J."/>
            <person name="Fabret C."/>
            <person name="Ferrari E."/>
            <person name="Foulger D."/>
            <person name="Fritz C."/>
            <person name="Fujita M."/>
            <person name="Fujita Y."/>
            <person name="Fuma S."/>
            <person name="Galizzi A."/>
            <person name="Galleron N."/>
            <person name="Ghim S.-Y."/>
            <person name="Glaser P."/>
            <person name="Goffeau A."/>
            <person name="Golightly E.J."/>
            <person name="Grandi G."/>
            <person name="Guiseppi G."/>
            <person name="Guy B.J."/>
            <person name="Haga K."/>
            <person name="Haiech J."/>
            <person name="Harwood C.R."/>
            <person name="Henaut A."/>
            <person name="Hilbert H."/>
            <person name="Holsappel S."/>
            <person name="Hosono S."/>
            <person name="Hullo M.-F."/>
            <person name="Itaya M."/>
            <person name="Jones L.-M."/>
            <person name="Joris B."/>
            <person name="Karamata D."/>
            <person name="Kasahara Y."/>
            <person name="Klaerr-Blanchard M."/>
            <person name="Klein C."/>
            <person name="Kobayashi Y."/>
            <person name="Koetter P."/>
            <person name="Koningstein G."/>
            <person name="Krogh S."/>
            <person name="Kumano M."/>
            <person name="Kurita K."/>
            <person name="Lapidus A."/>
            <person name="Lardinois S."/>
            <person name="Lauber J."/>
            <person name="Lazarevic V."/>
            <person name="Lee S.-M."/>
            <person name="Levine A."/>
            <person name="Liu H."/>
            <person name="Masuda S."/>
            <person name="Mauel C."/>
            <person name="Medigue C."/>
            <person name="Medina N."/>
            <person name="Mellado R.P."/>
            <person name="Mizuno M."/>
            <person name="Moestl D."/>
            <person name="Nakai S."/>
            <person name="Noback M."/>
            <person name="Noone D."/>
            <person name="O'Reilly M."/>
            <person name="Ogawa K."/>
            <person name="Ogiwara A."/>
            <person name="Oudega B."/>
            <person name="Park S.-H."/>
            <person name="Parro V."/>
            <person name="Pohl T.M."/>
            <person name="Portetelle D."/>
            <person name="Porwollik S."/>
            <person name="Prescott A.M."/>
            <person name="Presecan E."/>
            <person name="Pujic P."/>
            <person name="Purnelle B."/>
            <person name="Rapoport G."/>
            <person name="Rey M."/>
            <person name="Reynolds S."/>
            <person name="Rieger M."/>
            <person name="Rivolta C."/>
            <person name="Rocha E."/>
            <person name="Roche B."/>
            <person name="Rose M."/>
            <person name="Sadaie Y."/>
            <person name="Sato T."/>
            <person name="Scanlan E."/>
            <person name="Schleich S."/>
            <person name="Schroeter R."/>
            <person name="Scoffone F."/>
            <person name="Sekiguchi J."/>
            <person name="Sekowska A."/>
            <person name="Seror S.J."/>
            <person name="Serror P."/>
            <person name="Shin B.-S."/>
            <person name="Soldo B."/>
            <person name="Sorokin A."/>
            <person name="Tacconi E."/>
            <person name="Takagi T."/>
            <person name="Takahashi H."/>
            <person name="Takemaru K."/>
            <person name="Takeuchi M."/>
            <person name="Tamakoshi A."/>
            <person name="Tanaka T."/>
            <person name="Terpstra P."/>
            <person name="Tognoni A."/>
            <person name="Tosato V."/>
            <person name="Uchiyama S."/>
            <person name="Vandenbol M."/>
            <person name="Vannier F."/>
            <person name="Vassarotti A."/>
            <person name="Viari A."/>
            <person name="Wambutt R."/>
            <person name="Wedler E."/>
            <person name="Wedler H."/>
            <person name="Weitzenegger T."/>
            <person name="Winters P."/>
            <person name="Wipat A."/>
            <person name="Yamamoto H."/>
            <person name="Yamane K."/>
            <person name="Yasumoto K."/>
            <person name="Yata K."/>
            <person name="Yoshida K."/>
            <person name="Yoshikawa H.-F."/>
            <person name="Zumstein E."/>
            <person name="Yoshikawa H."/>
            <person name="Danchin A."/>
        </authorList>
    </citation>
    <scope>NUCLEOTIDE SEQUENCE [LARGE SCALE GENOMIC DNA]</scope>
    <source>
        <strain>168</strain>
    </source>
</reference>
<comment type="subcellular location">
    <subcellularLocation>
        <location evidence="2">Cell membrane</location>
        <topology evidence="2">Multi-pass membrane protein</topology>
    </subcellularLocation>
</comment>
<comment type="similarity">
    <text evidence="2">Belongs to the ArsB family.</text>
</comment>
<gene>
    <name type="primary">ywrK</name>
    <name type="ordered locus">BSU36030</name>
</gene>
<evidence type="ECO:0000255" key="1"/>
<evidence type="ECO:0000305" key="2"/>
<dbReference type="EMBL" id="Z93767">
    <property type="protein sequence ID" value="CAB07801.1"/>
    <property type="molecule type" value="Genomic_DNA"/>
</dbReference>
<dbReference type="EMBL" id="AL009126">
    <property type="protein sequence ID" value="CAB15620.1"/>
    <property type="molecule type" value="Genomic_DNA"/>
</dbReference>
<dbReference type="PIR" id="B70069">
    <property type="entry name" value="B70069"/>
</dbReference>
<dbReference type="RefSeq" id="NP_391484.1">
    <property type="nucleotide sequence ID" value="NC_000964.3"/>
</dbReference>
<dbReference type="RefSeq" id="WP_010886626.1">
    <property type="nucleotide sequence ID" value="NZ_OZ025638.1"/>
</dbReference>
<dbReference type="SMR" id="O05224"/>
<dbReference type="FunCoup" id="O05224">
    <property type="interactions" value="155"/>
</dbReference>
<dbReference type="STRING" id="224308.BSU36030"/>
<dbReference type="PaxDb" id="224308-BSU36030"/>
<dbReference type="EnsemblBacteria" id="CAB15620">
    <property type="protein sequence ID" value="CAB15620"/>
    <property type="gene ID" value="BSU_36030"/>
</dbReference>
<dbReference type="GeneID" id="936864"/>
<dbReference type="KEGG" id="bsu:BSU36030"/>
<dbReference type="PATRIC" id="fig|224308.43.peg.3775"/>
<dbReference type="eggNOG" id="COG1055">
    <property type="taxonomic scope" value="Bacteria"/>
</dbReference>
<dbReference type="InParanoid" id="O05224"/>
<dbReference type="OrthoDB" id="9774335at2"/>
<dbReference type="PhylomeDB" id="O05224"/>
<dbReference type="BioCyc" id="BSUB:BSU36030-MONOMER"/>
<dbReference type="Proteomes" id="UP000001570">
    <property type="component" value="Chromosome"/>
</dbReference>
<dbReference type="GO" id="GO:0005886">
    <property type="term" value="C:plasma membrane"/>
    <property type="evidence" value="ECO:0000318"/>
    <property type="project" value="GO_Central"/>
</dbReference>
<dbReference type="GO" id="GO:0015105">
    <property type="term" value="F:arsenite transmembrane transporter activity"/>
    <property type="evidence" value="ECO:0007669"/>
    <property type="project" value="InterPro"/>
</dbReference>
<dbReference type="GO" id="GO:0046685">
    <property type="term" value="P:response to arsenic-containing substance"/>
    <property type="evidence" value="ECO:0007669"/>
    <property type="project" value="UniProtKB-KW"/>
</dbReference>
<dbReference type="CDD" id="cd01118">
    <property type="entry name" value="ArsB_permease"/>
    <property type="match status" value="1"/>
</dbReference>
<dbReference type="InterPro" id="IPR000802">
    <property type="entry name" value="Arsenical_pump_ArsB"/>
</dbReference>
<dbReference type="PANTHER" id="PTHR43302:SF6">
    <property type="entry name" value="ARSENICAL PUMP MEMBRANE PROTEIN-RELATED"/>
    <property type="match status" value="1"/>
</dbReference>
<dbReference type="PANTHER" id="PTHR43302">
    <property type="entry name" value="TRANSPORTER ARSB-RELATED"/>
    <property type="match status" value="1"/>
</dbReference>
<dbReference type="Pfam" id="PF02040">
    <property type="entry name" value="ArsB"/>
    <property type="match status" value="1"/>
</dbReference>
<dbReference type="PRINTS" id="PR00758">
    <property type="entry name" value="ARSENICPUMP"/>
</dbReference>
<organism>
    <name type="scientific">Bacillus subtilis (strain 168)</name>
    <dbReference type="NCBI Taxonomy" id="224308"/>
    <lineage>
        <taxon>Bacteria</taxon>
        <taxon>Bacillati</taxon>
        <taxon>Bacillota</taxon>
        <taxon>Bacilli</taxon>
        <taxon>Bacillales</taxon>
        <taxon>Bacillaceae</taxon>
        <taxon>Bacillus</taxon>
    </lineage>
</organism>
<accession>O05224</accession>
<accession>Q795C5</accession>
<feature type="chain" id="PRO_0000360856" description="Putative arsenical pump membrane protein">
    <location>
        <begin position="1"/>
        <end position="442"/>
    </location>
</feature>
<feature type="transmembrane region" description="Helical" evidence="1">
    <location>
        <begin position="22"/>
        <end position="42"/>
    </location>
</feature>
<feature type="transmembrane region" description="Helical" evidence="1">
    <location>
        <begin position="56"/>
        <end position="76"/>
    </location>
</feature>
<feature type="transmembrane region" description="Helical" evidence="1">
    <location>
        <begin position="85"/>
        <end position="105"/>
    </location>
</feature>
<feature type="transmembrane region" description="Helical" evidence="1">
    <location>
        <begin position="107"/>
        <end position="127"/>
    </location>
</feature>
<feature type="transmembrane region" description="Helical" evidence="1">
    <location>
        <begin position="136"/>
        <end position="156"/>
    </location>
</feature>
<feature type="transmembrane region" description="Helical" evidence="1">
    <location>
        <begin position="174"/>
        <end position="194"/>
    </location>
</feature>
<feature type="transmembrane region" description="Helical" evidence="1">
    <location>
        <begin position="250"/>
        <end position="270"/>
    </location>
</feature>
<feature type="transmembrane region" description="Helical" evidence="1">
    <location>
        <begin position="294"/>
        <end position="314"/>
    </location>
</feature>
<feature type="transmembrane region" description="Helical" evidence="1">
    <location>
        <begin position="328"/>
        <end position="347"/>
    </location>
</feature>
<feature type="transmembrane region" description="Helical" evidence="1">
    <location>
        <begin position="378"/>
        <end position="398"/>
    </location>
</feature>
<feature type="transmembrane region" description="Helical" evidence="1">
    <location>
        <begin position="419"/>
        <end position="439"/>
    </location>
</feature>
<name>YWRK_BACSU</name>
<proteinExistence type="inferred from homology"/>
<keyword id="KW-0059">Arsenical resistance</keyword>
<keyword id="KW-1003">Cell membrane</keyword>
<keyword id="KW-0472">Membrane</keyword>
<keyword id="KW-1185">Reference proteome</keyword>
<keyword id="KW-0812">Transmembrane</keyword>
<keyword id="KW-1133">Transmembrane helix</keyword>
<sequence>MLAFFVTMIFIFWRPKGLNEAIPATFGALMVLLCGSVSLADLGEIGTKVTGASVTILATMIMAIALESFGFFYWVAAKLLQQSKGSGIKLFWLTNLLCFLMTIFLNNDGSILITTPILLLVLKYLGLKKHQKAPYLLSGVLIATASSAPIGVSNIVNLISLKIIGMDLYLHTAMMFVPSMMGLIFMTCLLFMFFYKRLPKSLPDIPGHFQSLRHRRYHPLHSPSAPLPERNQTKIMLFVLAFVFLVRMSLFAASYTGISVPLVAVIGSFILLSWRWIYFKTSPRDLLYKSPWHIFIFAFTMYVLIYGLHNIGFTELLVSYFEPVVSGSLAHATFASGISTSVFSNLFNNHPALMISTFTLTEMTLNPSTTKIIYLANIIGSDIGSLLLPMGTLATLIWMHILKQHDESISWGEYIKTTIIIIPLTVLFTLTCLYFWISWLFL</sequence>